<keyword id="KW-0880">Kelch repeat</keyword>
<keyword id="KW-0597">Phosphoprotein</keyword>
<keyword id="KW-1185">Reference proteome</keyword>
<keyword id="KW-0677">Repeat</keyword>
<feature type="chain" id="PRO_0000228999" description="Kelch domain-containing protein 4">
    <location>
        <begin position="1"/>
        <end position="584"/>
    </location>
</feature>
<feature type="repeat" description="Kelch 1">
    <location>
        <begin position="77"/>
        <end position="129"/>
    </location>
</feature>
<feature type="repeat" description="Kelch 2">
    <location>
        <begin position="133"/>
        <end position="187"/>
    </location>
</feature>
<feature type="repeat" description="Kelch 3">
    <location>
        <begin position="188"/>
        <end position="238"/>
    </location>
</feature>
<feature type="repeat" description="Kelch 4">
    <location>
        <begin position="243"/>
        <end position="289"/>
    </location>
</feature>
<feature type="repeat" description="Kelch 5">
    <location>
        <begin position="308"/>
        <end position="361"/>
    </location>
</feature>
<feature type="repeat" description="Kelch 6">
    <location>
        <begin position="443"/>
        <end position="494"/>
    </location>
</feature>
<feature type="region of interest" description="Disordered" evidence="2">
    <location>
        <begin position="1"/>
        <end position="33"/>
    </location>
</feature>
<feature type="region of interest" description="Disordered" evidence="2">
    <location>
        <begin position="50"/>
        <end position="69"/>
    </location>
</feature>
<feature type="region of interest" description="Disordered" evidence="2">
    <location>
        <begin position="348"/>
        <end position="381"/>
    </location>
</feature>
<feature type="region of interest" description="Disordered" evidence="2">
    <location>
        <begin position="405"/>
        <end position="433"/>
    </location>
</feature>
<feature type="region of interest" description="Disordered" evidence="2">
    <location>
        <begin position="482"/>
        <end position="533"/>
    </location>
</feature>
<feature type="compositionally biased region" description="Basic residues" evidence="2">
    <location>
        <begin position="1"/>
        <end position="10"/>
    </location>
</feature>
<feature type="compositionally biased region" description="Basic and acidic residues" evidence="2">
    <location>
        <begin position="11"/>
        <end position="24"/>
    </location>
</feature>
<feature type="compositionally biased region" description="Acidic residues" evidence="2">
    <location>
        <begin position="487"/>
        <end position="519"/>
    </location>
</feature>
<feature type="compositionally biased region" description="Basic and acidic residues" evidence="2">
    <location>
        <begin position="520"/>
        <end position="533"/>
    </location>
</feature>
<feature type="modified residue" description="Phosphoserine" evidence="1">
    <location>
        <position position="418"/>
    </location>
</feature>
<feature type="sequence conflict" description="In Ref. 1; AAH12312." evidence="3" ref="1">
    <original>K</original>
    <variation>E</variation>
    <location>
        <position position="509"/>
    </location>
</feature>
<organism>
    <name type="scientific">Mus musculus</name>
    <name type="common">Mouse</name>
    <dbReference type="NCBI Taxonomy" id="10090"/>
    <lineage>
        <taxon>Eukaryota</taxon>
        <taxon>Metazoa</taxon>
        <taxon>Chordata</taxon>
        <taxon>Craniata</taxon>
        <taxon>Vertebrata</taxon>
        <taxon>Euteleostomi</taxon>
        <taxon>Mammalia</taxon>
        <taxon>Eutheria</taxon>
        <taxon>Euarchontoglires</taxon>
        <taxon>Glires</taxon>
        <taxon>Rodentia</taxon>
        <taxon>Myomorpha</taxon>
        <taxon>Muroidea</taxon>
        <taxon>Muridae</taxon>
        <taxon>Murinae</taxon>
        <taxon>Mus</taxon>
        <taxon>Mus</taxon>
    </lineage>
</organism>
<protein>
    <recommendedName>
        <fullName>Kelch domain-containing protein 4</fullName>
    </recommendedName>
</protein>
<accession>Q921I2</accession>
<accession>Q8CIK0</accession>
<proteinExistence type="evidence at transcript level"/>
<dbReference type="EMBL" id="BC012312">
    <property type="protein sequence ID" value="AAH12312.1"/>
    <property type="molecule type" value="mRNA"/>
</dbReference>
<dbReference type="EMBL" id="BC023738">
    <property type="protein sequence ID" value="AAH23738.2"/>
    <property type="molecule type" value="mRNA"/>
</dbReference>
<dbReference type="CCDS" id="CCDS22729.1"/>
<dbReference type="SMR" id="Q921I2"/>
<dbReference type="FunCoup" id="Q921I2">
    <property type="interactions" value="324"/>
</dbReference>
<dbReference type="STRING" id="10090.ENSMUSP00000043439"/>
<dbReference type="GlyGen" id="Q921I2">
    <property type="glycosylation" value="1 site"/>
</dbReference>
<dbReference type="iPTMnet" id="Q921I2"/>
<dbReference type="PhosphoSitePlus" id="Q921I2"/>
<dbReference type="PaxDb" id="10090-ENSMUSP00000043439"/>
<dbReference type="PeptideAtlas" id="Q921I2"/>
<dbReference type="ProteomicsDB" id="263449"/>
<dbReference type="Pumba" id="Q921I2"/>
<dbReference type="AGR" id="MGI:2384569"/>
<dbReference type="MGI" id="MGI:2384569">
    <property type="gene designation" value="Klhdc4"/>
</dbReference>
<dbReference type="eggNOG" id="KOG1230">
    <property type="taxonomic scope" value="Eukaryota"/>
</dbReference>
<dbReference type="InParanoid" id="Q921I2"/>
<dbReference type="PhylomeDB" id="Q921I2"/>
<dbReference type="ChiTaRS" id="Klhdc4">
    <property type="organism name" value="mouse"/>
</dbReference>
<dbReference type="PRO" id="PR:Q921I2"/>
<dbReference type="Proteomes" id="UP000000589">
    <property type="component" value="Unplaced"/>
</dbReference>
<dbReference type="RNAct" id="Q921I2">
    <property type="molecule type" value="protein"/>
</dbReference>
<dbReference type="Gene3D" id="2.120.10.80">
    <property type="entry name" value="Kelch-type beta propeller"/>
    <property type="match status" value="2"/>
</dbReference>
<dbReference type="InterPro" id="IPR015915">
    <property type="entry name" value="Kelch-typ_b-propeller"/>
</dbReference>
<dbReference type="InterPro" id="IPR052588">
    <property type="entry name" value="Kelch_domain_protein"/>
</dbReference>
<dbReference type="PANTHER" id="PTHR46063">
    <property type="entry name" value="KELCH DOMAIN-CONTAINING PROTEIN"/>
    <property type="match status" value="1"/>
</dbReference>
<dbReference type="PANTHER" id="PTHR46063:SF1">
    <property type="entry name" value="KELCH DOMAIN-CONTAINING PROTEIN 4"/>
    <property type="match status" value="1"/>
</dbReference>
<dbReference type="Pfam" id="PF24681">
    <property type="entry name" value="Kelch_KLHDC2_KLHL20_DRC7"/>
    <property type="match status" value="1"/>
</dbReference>
<dbReference type="SUPFAM" id="SSF117281">
    <property type="entry name" value="Kelch motif"/>
    <property type="match status" value="2"/>
</dbReference>
<name>KLDC4_MOUSE</name>
<evidence type="ECO:0000250" key="1">
    <source>
        <dbReference type="UniProtKB" id="Q8TBB5"/>
    </source>
</evidence>
<evidence type="ECO:0000256" key="2">
    <source>
        <dbReference type="SAM" id="MobiDB-lite"/>
    </source>
</evidence>
<evidence type="ECO:0000305" key="3"/>
<gene>
    <name type="primary">Klhdc4</name>
</gene>
<reference key="1">
    <citation type="journal article" date="2004" name="Genome Res.">
        <title>The status, quality, and expansion of the NIH full-length cDNA project: the Mammalian Gene Collection (MGC).</title>
        <authorList>
            <consortium name="The MGC Project Team"/>
        </authorList>
    </citation>
    <scope>NUCLEOTIDE SEQUENCE [LARGE SCALE MRNA]</scope>
    <source>
        <strain>FVB/N</strain>
        <tissue>Mammary tumor</tissue>
    </source>
</reference>
<sequence>MGKKGKKEKKGRGAEKTAAKMEKKVSKRSRKEEEDLEALIAHFQTLDAKKTQVTETPCPPPSPRLNASLSAHPEKDELILFGGEYFNGQKTFMYNELYIYSIRKDTWTKVDIPGPPPRRCAHQAVVVPQGGGQLWVFGGEFASPDGEQFYHYKDLWVLHLATKTWEQIRSTGGPSGRSGHRMVAWKRQLILFGGFHESARDYIYYSDVYTFSLDTFQWSKLSPSGAGPTPRSGCLMAVTPQGSIAIYGGYSKQRVKKDVDKGTQHSDMFLLKPAEGGEGKWAWTRINPSGVKPTARSGFSVAVAPNHQILVFGGVCDEEEEESLEGSFFSDLYIYDAAKSRWFAAQLKGPKSEKKKRRRGKAEDPEGTTEQETGGSSAPEPLEVIKEVVSEDGTVVTIKQVLTPSGLGVQPSPKADDSASEASSTGQEPCPRSNAMLAVKHGLLYVYGGMFEAGDRQVTLSDLYCLDLHKMEEWKTLVEMDPKSQEWLEESDSEEDSSSDEESEDGEDKDQEDSAEEGADPQHPEVARGEQFEEYLSRTEQHWLKLARSHVGPEAKEKKVLKVAQAMAKSCFDDAVQDIAQARH</sequence>